<evidence type="ECO:0000250" key="1"/>
<evidence type="ECO:0000255" key="2"/>
<evidence type="ECO:0000305" key="3"/>
<reference key="1">
    <citation type="journal article" date="2010" name="Zoology">
        <title>Transcriptome analysis of the venom glands of the Chinese wolf spider Lycosa singoriensis.</title>
        <authorList>
            <person name="Zhang Y."/>
            <person name="Chen J."/>
            <person name="Tang X."/>
            <person name="Wang F."/>
            <person name="Jiang L."/>
            <person name="Xiong X."/>
            <person name="Wang M."/>
            <person name="Rong M."/>
            <person name="Liu Z."/>
            <person name="Liang S."/>
        </authorList>
    </citation>
    <scope>NUCLEOTIDE SEQUENCE [LARGE SCALE MRNA]</scope>
    <source>
        <tissue>Venom gland</tissue>
    </source>
</reference>
<proteinExistence type="evidence at transcript level"/>
<comment type="subcellular location">
    <subcellularLocation>
        <location evidence="1">Secreted</location>
    </subcellularLocation>
</comment>
<comment type="tissue specificity">
    <text>Expressed by the venom gland.</text>
</comment>
<comment type="PTM">
    <text evidence="1">Contains 4 disulfide bonds.</text>
</comment>
<comment type="similarity">
    <text evidence="3">Belongs to the neurotoxin 19 (CSTX) family. 08 (U8-Lctx) subfamily.</text>
</comment>
<organism>
    <name type="scientific">Lycosa singoriensis</name>
    <name type="common">Wolf spider</name>
    <name type="synonym">Aranea singoriensis</name>
    <dbReference type="NCBI Taxonomy" id="434756"/>
    <lineage>
        <taxon>Eukaryota</taxon>
        <taxon>Metazoa</taxon>
        <taxon>Ecdysozoa</taxon>
        <taxon>Arthropoda</taxon>
        <taxon>Chelicerata</taxon>
        <taxon>Arachnida</taxon>
        <taxon>Araneae</taxon>
        <taxon>Araneomorphae</taxon>
        <taxon>Entelegynae</taxon>
        <taxon>Lycosoidea</taxon>
        <taxon>Lycosidae</taxon>
        <taxon>Lycosa</taxon>
    </lineage>
</organism>
<protein>
    <recommendedName>
        <fullName>U8-lycotoxin-Ls1m</fullName>
    </recommendedName>
    <alternativeName>
        <fullName>Toxin-like structure LSTX-H23</fullName>
    </alternativeName>
</protein>
<accession>B6DCZ4</accession>
<dbReference type="EMBL" id="EU926078">
    <property type="protein sequence ID" value="ACI41410.1"/>
    <property type="molecule type" value="mRNA"/>
</dbReference>
<dbReference type="EMBL" id="FM864082">
    <property type="protein sequence ID" value="CAS03679.1"/>
    <property type="molecule type" value="mRNA"/>
</dbReference>
<dbReference type="SMR" id="B6DCZ4"/>
<dbReference type="ArachnoServer" id="AS001016">
    <property type="toxin name" value="U8-lycotoxin-Ls1m"/>
</dbReference>
<dbReference type="GO" id="GO:0005576">
    <property type="term" value="C:extracellular region"/>
    <property type="evidence" value="ECO:0007669"/>
    <property type="project" value="UniProtKB-SubCell"/>
</dbReference>
<dbReference type="GO" id="GO:0090729">
    <property type="term" value="F:toxin activity"/>
    <property type="evidence" value="ECO:0007669"/>
    <property type="project" value="UniProtKB-KW"/>
</dbReference>
<dbReference type="InterPro" id="IPR019553">
    <property type="entry name" value="Spider_toxin_CSTX_knottin"/>
</dbReference>
<dbReference type="Pfam" id="PF10530">
    <property type="entry name" value="Toxin_35"/>
    <property type="match status" value="1"/>
</dbReference>
<name>TX823_LYCSI</name>
<feature type="signal peptide" evidence="2">
    <location>
        <begin position="1"/>
        <end position="20"/>
    </location>
</feature>
<feature type="propeptide" id="PRO_0000401807" evidence="1">
    <location>
        <begin position="21"/>
        <end position="26"/>
    </location>
</feature>
<feature type="chain" id="PRO_0000401808" description="U8-lycotoxin-Ls1m">
    <location>
        <begin position="27"/>
        <end position="77"/>
    </location>
</feature>
<sequence length="77" mass="8666">MKLMIFTGLVLFAIVRLIEAQAENEKPCLPEYKVCTHAPGNCCSDLVCDCYGRYKSGAQIGRNCFCLQKGVIYKREN</sequence>
<keyword id="KW-1015">Disulfide bond</keyword>
<keyword id="KW-0964">Secreted</keyword>
<keyword id="KW-0732">Signal</keyword>
<keyword id="KW-0800">Toxin</keyword>